<sequence length="214" mass="23822">MAPMKLYGAVMSWNLTRCATALEEAGSDYEIVPINFATAEHKSPEHLVRNPFGQVPALQDGDLYLFESRAICKYAARKNKPELLREGNLEEAAMVDVWIEVEANQYTAALNPILFQVLISPMLGGTTDQKVVDENLEKLKKVLEVYEARLTKCKYLAGDFLSLADLNHVSVTLCLFATPYASVLDAYPHVKAWWSGLMERPSVQKVAALMKPSA</sequence>
<accession>P12653</accession>
<name>GSTF1_MAIZE</name>
<reference key="1">
    <citation type="journal article" date="1988" name="Nucleic Acids Res.">
        <title>Characterization and heterospecific expression of cDNA clones of genes in the maize GSH S-transferase multigene family.</title>
        <authorList>
            <person name="Grove G."/>
            <person name="Zarlengo R.P."/>
            <person name="Timmerman K.P."/>
            <person name="Li N.-Q."/>
            <person name="Tam M.F."/>
            <person name="Tu C.-P.D."/>
        </authorList>
    </citation>
    <scope>NUCLEOTIDE SEQUENCE [MRNA]</scope>
</reference>
<reference key="2">
    <citation type="journal article" date="1986" name="Plant Mol. Biol.">
        <title>Structural analysis of a maize gene coding for glutathione-S-transferase involved in herbicide detoxification.</title>
        <authorList>
            <person name="Shah D.M."/>
            <person name="Hironaka C.M."/>
            <person name="Wiegand R.C."/>
            <person name="Harding E.I."/>
            <person name="Krivi G.G."/>
            <person name="Tiemeier D.C."/>
        </authorList>
        <dbReference type="AGRICOLA" id="IND86033490"/>
    </citation>
    <scope>NUCLEOTIDE SEQUENCE [GENOMIC DNA]</scope>
</reference>
<reference key="3">
    <citation type="journal article" date="1986" name="Plant Mol. Biol.">
        <title>Messenger RNA encoding a glutathione-S-transferase responsible for herbicide tolerance in maize is induced in response to safener treatment.</title>
        <authorList>
            <person name="Wiegand R.C."/>
            <person name="Shah D.M."/>
            <person name="Mozer T.J."/>
            <person name="Harding E.I."/>
            <person name="Diaz-Collier J."/>
            <person name="Saunders C."/>
            <person name="Jaworski E.G."/>
            <person name="Tiemeier D.C."/>
        </authorList>
        <dbReference type="AGRICOLA" id="IND87010820"/>
    </citation>
    <scope>PROTEIN SEQUENCE OF 2-16</scope>
</reference>
<reference key="4">
    <citation type="journal article" date="1997" name="J. Mol. Biol.">
        <title>Crystal structure of herbicide-detoxifying maize glutathione S-transferase-I in complex with lactoylglutathione: evidence for an induced-fit mechanism.</title>
        <authorList>
            <person name="Neuefeind T."/>
            <person name="Huber R."/>
            <person name="Dasenbrock H."/>
            <person name="Prade L."/>
            <person name="Bieseler B."/>
        </authorList>
    </citation>
    <scope>X-RAY CRYSTALLOGRAPHY (2.5 ANGSTROMS) IN COMPLEX WITH LACTOYLGLUTATHIONE</scope>
    <scope>SUBUNIT</scope>
</reference>
<reference key="5">
    <citation type="journal article" date="1998" name="Structure">
        <title>Structures of herbicides in complex with their detoxifying enzyme glutathione S-transferase -- explanations for the selectivity of the enzyme in plants.</title>
        <authorList>
            <person name="Prade L."/>
            <person name="Huber R."/>
            <person name="Bieseler B."/>
        </authorList>
    </citation>
    <scope>X-RAY CRYSTALLOGRAPHY (2.8 ANGSTROMS) IN COMPLEX WITH ATRAZINE-GLUTATHIONE CONJUGATE</scope>
</reference>
<dbReference type="EC" id="2.5.1.18"/>
<dbReference type="EMBL" id="X06754">
    <property type="protein sequence ID" value="CAA29928.1"/>
    <property type="molecule type" value="mRNA"/>
</dbReference>
<dbReference type="EMBL" id="M16901">
    <property type="protein sequence ID" value="AAA33470.1"/>
    <property type="molecule type" value="mRNA"/>
</dbReference>
<dbReference type="EMBL" id="M16902">
    <property type="protein sequence ID" value="AAA33469.1"/>
    <property type="molecule type" value="Genomic_DNA"/>
</dbReference>
<dbReference type="EMBL" id="M16900">
    <property type="protein sequence ID" value="AAA33469.1"/>
    <property type="status" value="JOINED"/>
    <property type="molecule type" value="Genomic_DNA"/>
</dbReference>
<dbReference type="PIR" id="S03726">
    <property type="entry name" value="XUZM1"/>
</dbReference>
<dbReference type="RefSeq" id="NP_001105412.1">
    <property type="nucleotide sequence ID" value="NM_001111942.1"/>
</dbReference>
<dbReference type="PDB" id="1AXD">
    <property type="method" value="X-ray"/>
    <property type="resolution" value="2.50 A"/>
    <property type="chains" value="A/B=2-210"/>
</dbReference>
<dbReference type="PDB" id="1BYE">
    <property type="method" value="X-ray"/>
    <property type="resolution" value="2.80 A"/>
    <property type="chains" value="A/B/C/D=2-214"/>
</dbReference>
<dbReference type="PDBsum" id="1AXD"/>
<dbReference type="PDBsum" id="1BYE"/>
<dbReference type="SMR" id="P12653"/>
<dbReference type="FunCoup" id="P12653">
    <property type="interactions" value="1066"/>
</dbReference>
<dbReference type="STRING" id="4577.P12653"/>
<dbReference type="PaxDb" id="4577-GRMZM2G116273_P01"/>
<dbReference type="GeneID" id="542366"/>
<dbReference type="KEGG" id="zma:542366"/>
<dbReference type="MaizeGDB" id="65344"/>
<dbReference type="eggNOG" id="KOG0867">
    <property type="taxonomic scope" value="Eukaryota"/>
</dbReference>
<dbReference type="InParanoid" id="P12653"/>
<dbReference type="OrthoDB" id="422574at2759"/>
<dbReference type="BRENDA" id="2.5.1.18">
    <property type="organism ID" value="6752"/>
</dbReference>
<dbReference type="SABIO-RK" id="P12653"/>
<dbReference type="EvolutionaryTrace" id="P12653"/>
<dbReference type="Proteomes" id="UP000007305">
    <property type="component" value="Unplaced"/>
</dbReference>
<dbReference type="ExpressionAtlas" id="P12653">
    <property type="expression patterns" value="baseline and differential"/>
</dbReference>
<dbReference type="GO" id="GO:0005737">
    <property type="term" value="C:cytoplasm"/>
    <property type="evidence" value="ECO:0000318"/>
    <property type="project" value="GO_Central"/>
</dbReference>
<dbReference type="GO" id="GO:0032991">
    <property type="term" value="C:protein-containing complex"/>
    <property type="evidence" value="ECO:0000314"/>
    <property type="project" value="AgBase"/>
</dbReference>
<dbReference type="GO" id="GO:0043295">
    <property type="term" value="F:glutathione binding"/>
    <property type="evidence" value="ECO:0000318"/>
    <property type="project" value="GO_Central"/>
</dbReference>
<dbReference type="GO" id="GO:0004364">
    <property type="term" value="F:glutathione transferase activity"/>
    <property type="evidence" value="ECO:0000314"/>
    <property type="project" value="AgBase"/>
</dbReference>
<dbReference type="GO" id="GO:0006749">
    <property type="term" value="P:glutathione metabolic process"/>
    <property type="evidence" value="ECO:0000318"/>
    <property type="project" value="GO_Central"/>
</dbReference>
<dbReference type="GO" id="GO:0009635">
    <property type="term" value="P:response to herbicide"/>
    <property type="evidence" value="ECO:0000304"/>
    <property type="project" value="AgBase"/>
</dbReference>
<dbReference type="GO" id="GO:0042542">
    <property type="term" value="P:response to hydrogen peroxide"/>
    <property type="evidence" value="ECO:0000304"/>
    <property type="project" value="AgBase"/>
</dbReference>
<dbReference type="GO" id="GO:0000302">
    <property type="term" value="P:response to reactive oxygen species"/>
    <property type="evidence" value="ECO:0000270"/>
    <property type="project" value="AgBase"/>
</dbReference>
<dbReference type="GO" id="GO:0009751">
    <property type="term" value="P:response to salicylic acid"/>
    <property type="evidence" value="ECO:0000304"/>
    <property type="project" value="AgBase"/>
</dbReference>
<dbReference type="GO" id="GO:0009410">
    <property type="term" value="P:response to xenobiotic stimulus"/>
    <property type="evidence" value="ECO:0000270"/>
    <property type="project" value="AgBase"/>
</dbReference>
<dbReference type="CDD" id="cd03187">
    <property type="entry name" value="GST_C_Phi"/>
    <property type="match status" value="1"/>
</dbReference>
<dbReference type="CDD" id="cd03053">
    <property type="entry name" value="GST_N_Phi"/>
    <property type="match status" value="1"/>
</dbReference>
<dbReference type="FunFam" id="1.20.1050.10:FF:000004">
    <property type="entry name" value="Glutathione S-transferase F2"/>
    <property type="match status" value="1"/>
</dbReference>
<dbReference type="FunFam" id="3.40.30.10:FF:000016">
    <property type="entry name" value="Glutathione S-transferase F2"/>
    <property type="match status" value="1"/>
</dbReference>
<dbReference type="Gene3D" id="1.20.1050.10">
    <property type="match status" value="1"/>
</dbReference>
<dbReference type="Gene3D" id="3.40.30.10">
    <property type="entry name" value="Glutaredoxin"/>
    <property type="match status" value="1"/>
</dbReference>
<dbReference type="InterPro" id="IPR010987">
    <property type="entry name" value="Glutathione-S-Trfase_C-like"/>
</dbReference>
<dbReference type="InterPro" id="IPR036282">
    <property type="entry name" value="Glutathione-S-Trfase_C_sf"/>
</dbReference>
<dbReference type="InterPro" id="IPR040079">
    <property type="entry name" value="Glutathione_S-Trfase"/>
</dbReference>
<dbReference type="InterPro" id="IPR004045">
    <property type="entry name" value="Glutathione_S-Trfase_N"/>
</dbReference>
<dbReference type="InterPro" id="IPR004046">
    <property type="entry name" value="GST_C"/>
</dbReference>
<dbReference type="InterPro" id="IPR034347">
    <property type="entry name" value="GST_Phi_C"/>
</dbReference>
<dbReference type="InterPro" id="IPR036249">
    <property type="entry name" value="Thioredoxin-like_sf"/>
</dbReference>
<dbReference type="PANTHER" id="PTHR43900:SF39">
    <property type="entry name" value="GLUTATHIONE S-TRANSFERASE GSTF2-RELATED"/>
    <property type="match status" value="1"/>
</dbReference>
<dbReference type="PANTHER" id="PTHR43900">
    <property type="entry name" value="GLUTATHIONE S-TRANSFERASE RHO"/>
    <property type="match status" value="1"/>
</dbReference>
<dbReference type="Pfam" id="PF00043">
    <property type="entry name" value="GST_C"/>
    <property type="match status" value="1"/>
</dbReference>
<dbReference type="Pfam" id="PF02798">
    <property type="entry name" value="GST_N"/>
    <property type="match status" value="1"/>
</dbReference>
<dbReference type="SFLD" id="SFLDS00019">
    <property type="entry name" value="Glutathione_Transferase_(cytos"/>
    <property type="match status" value="1"/>
</dbReference>
<dbReference type="SFLD" id="SFLDG01154">
    <property type="entry name" value="Main.5:_Phi-like"/>
    <property type="match status" value="1"/>
</dbReference>
<dbReference type="SUPFAM" id="SSF47616">
    <property type="entry name" value="GST C-terminal domain-like"/>
    <property type="match status" value="1"/>
</dbReference>
<dbReference type="SUPFAM" id="SSF52833">
    <property type="entry name" value="Thioredoxin-like"/>
    <property type="match status" value="1"/>
</dbReference>
<dbReference type="PROSITE" id="PS50405">
    <property type="entry name" value="GST_CTER"/>
    <property type="match status" value="1"/>
</dbReference>
<dbReference type="PROSITE" id="PS50404">
    <property type="entry name" value="GST_NTER"/>
    <property type="match status" value="1"/>
</dbReference>
<gene>
    <name type="primary">GST1</name>
</gene>
<evidence type="ECO:0000250" key="1"/>
<evidence type="ECO:0000269" key="2">
    <source>
    </source>
</evidence>
<evidence type="ECO:0000269" key="3">
    <source>
    </source>
</evidence>
<evidence type="ECO:0000269" key="4">
    <source ref="3"/>
</evidence>
<evidence type="ECO:0000305" key="5"/>
<evidence type="ECO:0007829" key="6">
    <source>
        <dbReference type="PDB" id="1AXD"/>
    </source>
</evidence>
<evidence type="ECO:0007829" key="7">
    <source>
        <dbReference type="PDB" id="1BYE"/>
    </source>
</evidence>
<keyword id="KW-0002">3D-structure</keyword>
<keyword id="KW-0903">Direct protein sequencing</keyword>
<keyword id="KW-1185">Reference proteome</keyword>
<keyword id="KW-0808">Transferase</keyword>
<protein>
    <recommendedName>
        <fullName>Glutathione S-transferase 1</fullName>
        <ecNumber>2.5.1.18</ecNumber>
    </recommendedName>
    <alternativeName>
        <fullName>GST class-phi member 1</fullName>
    </alternativeName>
    <alternativeName>
        <fullName>GST-29</fullName>
    </alternativeName>
    <alternativeName>
        <fullName>GST-I</fullName>
    </alternativeName>
</protein>
<proteinExistence type="evidence at protein level"/>
<organism>
    <name type="scientific">Zea mays</name>
    <name type="common">Maize</name>
    <dbReference type="NCBI Taxonomy" id="4577"/>
    <lineage>
        <taxon>Eukaryota</taxon>
        <taxon>Viridiplantae</taxon>
        <taxon>Streptophyta</taxon>
        <taxon>Embryophyta</taxon>
        <taxon>Tracheophyta</taxon>
        <taxon>Spermatophyta</taxon>
        <taxon>Magnoliopsida</taxon>
        <taxon>Liliopsida</taxon>
        <taxon>Poales</taxon>
        <taxon>Poaceae</taxon>
        <taxon>PACMAD clade</taxon>
        <taxon>Panicoideae</taxon>
        <taxon>Andropogonodae</taxon>
        <taxon>Andropogoneae</taxon>
        <taxon>Tripsacinae</taxon>
        <taxon>Zea</taxon>
    </lineage>
</organism>
<feature type="initiator methionine" description="Removed" evidence="4">
    <location>
        <position position="1"/>
    </location>
</feature>
<feature type="chain" id="PRO_0000185841" description="Glutathione S-transferase 1">
    <location>
        <begin position="2"/>
        <end position="214"/>
    </location>
</feature>
<feature type="domain" description="GST N-terminal">
    <location>
        <begin position="2"/>
        <end position="83"/>
    </location>
</feature>
<feature type="domain" description="GST C-terminal">
    <location>
        <begin position="88"/>
        <end position="214"/>
    </location>
</feature>
<feature type="binding site" evidence="1">
    <location>
        <position position="12"/>
    </location>
    <ligand>
        <name>glutathione</name>
        <dbReference type="ChEBI" id="CHEBI:57925"/>
    </ligand>
</feature>
<feature type="binding site">
    <location>
        <begin position="41"/>
        <end position="42"/>
    </location>
    <ligand>
        <name>glutathione</name>
        <dbReference type="ChEBI" id="CHEBI:57925"/>
    </ligand>
</feature>
<feature type="binding site">
    <location>
        <begin position="54"/>
        <end position="55"/>
    </location>
    <ligand>
        <name>glutathione</name>
        <dbReference type="ChEBI" id="CHEBI:57925"/>
    </ligand>
</feature>
<feature type="binding site">
    <location>
        <begin position="67"/>
        <end position="68"/>
    </location>
    <ligand>
        <name>glutathione</name>
        <dbReference type="ChEBI" id="CHEBI:57925"/>
    </ligand>
</feature>
<feature type="sequence conflict" description="In Ref. 2; AAA33470/AAA33469." evidence="5" ref="2">
    <original>L</original>
    <variation>V</variation>
    <location>
        <position position="15"/>
    </location>
</feature>
<feature type="strand" evidence="6">
    <location>
        <begin position="4"/>
        <end position="8"/>
    </location>
</feature>
<feature type="strand" evidence="7">
    <location>
        <begin position="10"/>
        <end position="14"/>
    </location>
</feature>
<feature type="helix" evidence="6">
    <location>
        <begin position="15"/>
        <end position="25"/>
    </location>
</feature>
<feature type="strand" evidence="6">
    <location>
        <begin position="29"/>
        <end position="32"/>
    </location>
</feature>
<feature type="turn" evidence="6">
    <location>
        <begin position="36"/>
        <end position="39"/>
    </location>
</feature>
<feature type="helix" evidence="6">
    <location>
        <begin position="40"/>
        <end position="42"/>
    </location>
</feature>
<feature type="helix" evidence="6">
    <location>
        <begin position="44"/>
        <end position="47"/>
    </location>
</feature>
<feature type="strand" evidence="6">
    <location>
        <begin position="57"/>
        <end position="60"/>
    </location>
</feature>
<feature type="strand" evidence="6">
    <location>
        <begin position="63"/>
        <end position="67"/>
    </location>
</feature>
<feature type="helix" evidence="6">
    <location>
        <begin position="68"/>
        <end position="79"/>
    </location>
</feature>
<feature type="helix" evidence="6">
    <location>
        <begin position="81"/>
        <end position="84"/>
    </location>
</feature>
<feature type="turn" evidence="6">
    <location>
        <begin position="85"/>
        <end position="87"/>
    </location>
</feature>
<feature type="helix" evidence="6">
    <location>
        <begin position="89"/>
        <end position="104"/>
    </location>
</feature>
<feature type="helix" evidence="6">
    <location>
        <begin position="106"/>
        <end position="117"/>
    </location>
</feature>
<feature type="helix" evidence="6">
    <location>
        <begin position="119"/>
        <end position="122"/>
    </location>
</feature>
<feature type="helix" evidence="6">
    <location>
        <begin position="129"/>
        <end position="152"/>
    </location>
</feature>
<feature type="strand" evidence="6">
    <location>
        <begin position="154"/>
        <end position="160"/>
    </location>
</feature>
<feature type="helix" evidence="6">
    <location>
        <begin position="163"/>
        <end position="166"/>
    </location>
</feature>
<feature type="helix" evidence="6">
    <location>
        <begin position="169"/>
        <end position="175"/>
    </location>
</feature>
<feature type="helix" evidence="6">
    <location>
        <begin position="179"/>
        <end position="186"/>
    </location>
</feature>
<feature type="helix" evidence="6">
    <location>
        <begin position="188"/>
        <end position="199"/>
    </location>
</feature>
<feature type="helix" evidence="6">
    <location>
        <begin position="201"/>
        <end position="209"/>
    </location>
</feature>
<comment type="function">
    <text>Conjugation of reduced glutathione to a wide number of exogenous and endogenous hydrophobic electrophiles. Involved in the detoxification of certain herbicides.</text>
</comment>
<comment type="catalytic activity">
    <reaction>
        <text>RX + glutathione = an S-substituted glutathione + a halide anion + H(+)</text>
        <dbReference type="Rhea" id="RHEA:16437"/>
        <dbReference type="ChEBI" id="CHEBI:15378"/>
        <dbReference type="ChEBI" id="CHEBI:16042"/>
        <dbReference type="ChEBI" id="CHEBI:17792"/>
        <dbReference type="ChEBI" id="CHEBI:57925"/>
        <dbReference type="ChEBI" id="CHEBI:90779"/>
        <dbReference type="EC" id="2.5.1.18"/>
    </reaction>
</comment>
<comment type="subunit">
    <text evidence="2 3">Homodimer or heterodimer of GST-I and GST-IV (=GST-II).</text>
</comment>
<comment type="tissue specificity">
    <text>Expressed in the stem and leaves, lower levels are seen in the pollen and endosperm.</text>
</comment>
<comment type="similarity">
    <text evidence="5">Belongs to the GST superfamily. Phi family.</text>
</comment>